<evidence type="ECO:0000250" key="1">
    <source>
        <dbReference type="UniProtKB" id="Q6B857"/>
    </source>
</evidence>
<evidence type="ECO:0000250" key="2">
    <source>
        <dbReference type="UniProtKB" id="Q9Y6A4"/>
    </source>
</evidence>
<evidence type="ECO:0000305" key="3"/>
<proteinExistence type="evidence at transcript level"/>
<gene>
    <name type="primary">CFAP20</name>
    <name type="ORF">RCJMB04_34o2</name>
</gene>
<name>CFA20_CHICK</name>
<keyword id="KW-0966">Cell projection</keyword>
<keyword id="KW-0969">Cilium</keyword>
<keyword id="KW-0963">Cytoplasm</keyword>
<keyword id="KW-0206">Cytoskeleton</keyword>
<keyword id="KW-0493">Microtubule</keyword>
<keyword id="KW-0539">Nucleus</keyword>
<keyword id="KW-1185">Reference proteome</keyword>
<organism>
    <name type="scientific">Gallus gallus</name>
    <name type="common">Chicken</name>
    <dbReference type="NCBI Taxonomy" id="9031"/>
    <lineage>
        <taxon>Eukaryota</taxon>
        <taxon>Metazoa</taxon>
        <taxon>Chordata</taxon>
        <taxon>Craniata</taxon>
        <taxon>Vertebrata</taxon>
        <taxon>Euteleostomi</taxon>
        <taxon>Archelosauria</taxon>
        <taxon>Archosauria</taxon>
        <taxon>Dinosauria</taxon>
        <taxon>Saurischia</taxon>
        <taxon>Theropoda</taxon>
        <taxon>Coelurosauria</taxon>
        <taxon>Aves</taxon>
        <taxon>Neognathae</taxon>
        <taxon>Galloanserae</taxon>
        <taxon>Galliformes</taxon>
        <taxon>Phasianidae</taxon>
        <taxon>Phasianinae</taxon>
        <taxon>Gallus</taxon>
    </lineage>
</organism>
<protein>
    <recommendedName>
        <fullName>Cilia- and flagella-associated protein 20</fullName>
    </recommendedName>
</protein>
<accession>Q5ZHP3</accession>
<dbReference type="EMBL" id="AJ721091">
    <property type="protein sequence ID" value="CAG32750.1"/>
    <property type="molecule type" value="mRNA"/>
</dbReference>
<dbReference type="RefSeq" id="NP_001005833.1">
    <property type="nucleotide sequence ID" value="NM_001005833.2"/>
</dbReference>
<dbReference type="SMR" id="Q5ZHP3"/>
<dbReference type="FunCoup" id="Q5ZHP3">
    <property type="interactions" value="509"/>
</dbReference>
<dbReference type="STRING" id="9031.ENSGALP00000064104"/>
<dbReference type="PaxDb" id="9031-ENSGALP00000001318"/>
<dbReference type="Ensembl" id="ENSGALT00010056500.1">
    <property type="protein sequence ID" value="ENSGALP00010034243.1"/>
    <property type="gene ID" value="ENSGALG00010023178.1"/>
</dbReference>
<dbReference type="GeneID" id="415627"/>
<dbReference type="KEGG" id="gga:415627"/>
<dbReference type="CTD" id="29105"/>
<dbReference type="VEuPathDB" id="HostDB:geneid_415627"/>
<dbReference type="eggNOG" id="KOG3213">
    <property type="taxonomic scope" value="Eukaryota"/>
</dbReference>
<dbReference type="GeneTree" id="ENSGT00390000004554"/>
<dbReference type="HOGENOM" id="CLU_060610_1_1_1"/>
<dbReference type="InParanoid" id="Q5ZHP3"/>
<dbReference type="OMA" id="TTYISCP"/>
<dbReference type="OrthoDB" id="7486196at2759"/>
<dbReference type="PhylomeDB" id="Q5ZHP3"/>
<dbReference type="TreeFam" id="TF313405"/>
<dbReference type="PRO" id="PR:Q5ZHP3"/>
<dbReference type="Proteomes" id="UP000000539">
    <property type="component" value="Chromosome 11"/>
</dbReference>
<dbReference type="Bgee" id="ENSGALG00000032634">
    <property type="expression patterns" value="Expressed in ovary and 13 other cell types or tissues"/>
</dbReference>
<dbReference type="GO" id="GO:0005879">
    <property type="term" value="C:axonemal microtubule"/>
    <property type="evidence" value="ECO:0000250"/>
    <property type="project" value="UniProtKB"/>
</dbReference>
<dbReference type="GO" id="GO:0005814">
    <property type="term" value="C:centriole"/>
    <property type="evidence" value="ECO:0000250"/>
    <property type="project" value="UniProtKB"/>
</dbReference>
<dbReference type="GO" id="GO:0036064">
    <property type="term" value="C:ciliary basal body"/>
    <property type="evidence" value="ECO:0000250"/>
    <property type="project" value="UniProtKB"/>
</dbReference>
<dbReference type="GO" id="GO:0005929">
    <property type="term" value="C:cilium"/>
    <property type="evidence" value="ECO:0000250"/>
    <property type="project" value="UniProtKB"/>
</dbReference>
<dbReference type="GO" id="GO:0031514">
    <property type="term" value="C:motile cilium"/>
    <property type="evidence" value="ECO:0000318"/>
    <property type="project" value="GO_Central"/>
</dbReference>
<dbReference type="GO" id="GO:0005634">
    <property type="term" value="C:nucleus"/>
    <property type="evidence" value="ECO:0007669"/>
    <property type="project" value="UniProtKB-SubCell"/>
</dbReference>
<dbReference type="GO" id="GO:0060271">
    <property type="term" value="P:cilium assembly"/>
    <property type="evidence" value="ECO:0000250"/>
    <property type="project" value="UniProtKB"/>
</dbReference>
<dbReference type="GO" id="GO:2000147">
    <property type="term" value="P:positive regulation of cell motility"/>
    <property type="evidence" value="ECO:0000250"/>
    <property type="project" value="UniProtKB"/>
</dbReference>
<dbReference type="GO" id="GO:2000253">
    <property type="term" value="P:positive regulation of feeding behavior"/>
    <property type="evidence" value="ECO:0000250"/>
    <property type="project" value="UniProtKB"/>
</dbReference>
<dbReference type="GO" id="GO:0018095">
    <property type="term" value="P:protein polyglutamylation"/>
    <property type="evidence" value="ECO:0000250"/>
    <property type="project" value="UniProtKB"/>
</dbReference>
<dbReference type="GO" id="GO:0060296">
    <property type="term" value="P:regulation of cilium beat frequency involved in ciliary motility"/>
    <property type="evidence" value="ECO:0000250"/>
    <property type="project" value="UniProtKB"/>
</dbReference>
<dbReference type="InterPro" id="IPR040441">
    <property type="entry name" value="CFA20/CFAP20DC"/>
</dbReference>
<dbReference type="InterPro" id="IPR007714">
    <property type="entry name" value="CFA20_dom"/>
</dbReference>
<dbReference type="PANTHER" id="PTHR12458">
    <property type="entry name" value="ORF PROTEIN"/>
    <property type="match status" value="1"/>
</dbReference>
<dbReference type="Pfam" id="PF05018">
    <property type="entry name" value="CFA20_dom"/>
    <property type="match status" value="1"/>
</dbReference>
<reference key="1">
    <citation type="journal article" date="2005" name="Genome Biol.">
        <title>Full-length cDNAs from chicken bursal lymphocytes to facilitate gene function analysis.</title>
        <authorList>
            <person name="Caldwell R.B."/>
            <person name="Kierzek A.M."/>
            <person name="Arakawa H."/>
            <person name="Bezzubov Y."/>
            <person name="Zaim J."/>
            <person name="Fiedler P."/>
            <person name="Kutter S."/>
            <person name="Blagodatski A."/>
            <person name="Kostovska D."/>
            <person name="Koter M."/>
            <person name="Plachy J."/>
            <person name="Carninci P."/>
            <person name="Hayashizaki Y."/>
            <person name="Buerstedde J.-M."/>
        </authorList>
    </citation>
    <scope>NUCLEOTIDE SEQUENCE [LARGE SCALE MRNA]</scope>
    <source>
        <strain>CB</strain>
        <tissue>Bursa of Fabricius</tissue>
    </source>
</reference>
<comment type="function">
    <text evidence="2">Cilium- and flagellum-specific protein that plays a role in axonemal structure organization and motility. Microtubule inner protein (MIP) part of the dynein-decorated doublet microtubules (DMTs) in cilia axoneme, which is required for motile cilia beating. Involved in the regulation of the size and morphology of cilia. Required for axonemal microtubules polyglutamylation.</text>
</comment>
<comment type="subcellular location">
    <subcellularLocation>
        <location evidence="2">Nucleus</location>
    </subcellularLocation>
    <subcellularLocation>
        <location evidence="2">Cytoplasm</location>
        <location evidence="2">Cytoskeleton</location>
        <location evidence="2">Microtubule organizing center</location>
        <location evidence="2">Centrosome</location>
        <location evidence="2">Centriole</location>
    </subcellularLocation>
    <subcellularLocation>
        <location evidence="2">Cytoplasm</location>
        <location evidence="2">Cytoskeleton</location>
        <location evidence="2">Cilium basal body</location>
    </subcellularLocation>
    <subcellularLocation>
        <location evidence="1">Cytoplasm</location>
        <location evidence="1">Cytoskeleton</location>
        <location evidence="1">Cilium axoneme</location>
    </subcellularLocation>
    <text evidence="1">Microtubule inner protein (MIP) part of the dynein-decorated doublet microtubules (DMTs) in cilia axoneme.</text>
</comment>
<comment type="similarity">
    <text evidence="3">Belongs to the CFAP20 family.</text>
</comment>
<sequence length="193" mass="22734">MFKNTFQSGFLSVLYSIGSKPLQIWDKKVRNGHIKRITDNDIQSLVLEIEGTNVSTTYITCPADPKKTLGIKLPFLVMIIKNLKKYFTFEVQVLDDKNVRRRFRASNYQSTTRVKPFICTMPMRLDDGWNQIQFNLSDFTRRAYGTNYIETLRVQIHANCRIRRVYFSDRLYSEDELPAEFKLYLPVQNKAKQ</sequence>
<feature type="chain" id="PRO_0000296401" description="Cilia- and flagella-associated protein 20">
    <location>
        <begin position="1"/>
        <end position="193"/>
    </location>
</feature>